<accession>Q0ST54</accession>
<sequence>MGKFEDKKQLRCSFCGKNQEQVKRLIAGPGVYICDECIELCSEIIEDEFEGNTESSPLETSNLPKPQEIKDYLDQYVVGQDRAKKSLAVAVYNHYKRINANKAEDDVELQKSNILLLGPTGSGKTLLAQTLAKMLNVPFAIADATTLTEAGYVGEDVENILLKLIQNADYDVERAEKGIIYIDEIDKIARKSENPSITRDVSGEGVQQALLKILEGTTASVPPQGGRKHPHQEFIQINTSNILFICGGAFDGIDKIIEKRGTKSSIGFGAEVKGKSEKNVGELLKDIMPGDLLKFGLIPEFVGRLPVLVTLEALDNEALVSILTKPKNALVKQYKKLFELDNVKLDFTEEALKAIADEAINRKTGARGLRAIVEETMMDIMFDIPSEENIVKATITEETIKDRKDPELEKLPEGEVRPTLKTEKKNKARKDIETA</sequence>
<dbReference type="EMBL" id="CP000312">
    <property type="protein sequence ID" value="ABG87589.1"/>
    <property type="molecule type" value="Genomic_DNA"/>
</dbReference>
<dbReference type="RefSeq" id="WP_011592357.1">
    <property type="nucleotide sequence ID" value="NC_008262.1"/>
</dbReference>
<dbReference type="SMR" id="Q0ST54"/>
<dbReference type="KEGG" id="cpr:CPR_1384"/>
<dbReference type="Proteomes" id="UP000001824">
    <property type="component" value="Chromosome"/>
</dbReference>
<dbReference type="GO" id="GO:0009376">
    <property type="term" value="C:HslUV protease complex"/>
    <property type="evidence" value="ECO:0007669"/>
    <property type="project" value="TreeGrafter"/>
</dbReference>
<dbReference type="GO" id="GO:0005524">
    <property type="term" value="F:ATP binding"/>
    <property type="evidence" value="ECO:0007669"/>
    <property type="project" value="UniProtKB-UniRule"/>
</dbReference>
<dbReference type="GO" id="GO:0016887">
    <property type="term" value="F:ATP hydrolysis activity"/>
    <property type="evidence" value="ECO:0007669"/>
    <property type="project" value="InterPro"/>
</dbReference>
<dbReference type="GO" id="GO:0140662">
    <property type="term" value="F:ATP-dependent protein folding chaperone"/>
    <property type="evidence" value="ECO:0007669"/>
    <property type="project" value="InterPro"/>
</dbReference>
<dbReference type="GO" id="GO:0046983">
    <property type="term" value="F:protein dimerization activity"/>
    <property type="evidence" value="ECO:0007669"/>
    <property type="project" value="InterPro"/>
</dbReference>
<dbReference type="GO" id="GO:0051082">
    <property type="term" value="F:unfolded protein binding"/>
    <property type="evidence" value="ECO:0007669"/>
    <property type="project" value="UniProtKB-UniRule"/>
</dbReference>
<dbReference type="GO" id="GO:0008270">
    <property type="term" value="F:zinc ion binding"/>
    <property type="evidence" value="ECO:0007669"/>
    <property type="project" value="InterPro"/>
</dbReference>
<dbReference type="GO" id="GO:0051301">
    <property type="term" value="P:cell division"/>
    <property type="evidence" value="ECO:0007669"/>
    <property type="project" value="TreeGrafter"/>
</dbReference>
<dbReference type="GO" id="GO:0051603">
    <property type="term" value="P:proteolysis involved in protein catabolic process"/>
    <property type="evidence" value="ECO:0007669"/>
    <property type="project" value="TreeGrafter"/>
</dbReference>
<dbReference type="CDD" id="cd19497">
    <property type="entry name" value="RecA-like_ClpX"/>
    <property type="match status" value="1"/>
</dbReference>
<dbReference type="FunFam" id="1.10.8.60:FF:000002">
    <property type="entry name" value="ATP-dependent Clp protease ATP-binding subunit ClpX"/>
    <property type="match status" value="1"/>
</dbReference>
<dbReference type="FunFam" id="3.40.50.300:FF:000005">
    <property type="entry name" value="ATP-dependent Clp protease ATP-binding subunit ClpX"/>
    <property type="match status" value="1"/>
</dbReference>
<dbReference type="Gene3D" id="1.10.8.60">
    <property type="match status" value="1"/>
</dbReference>
<dbReference type="Gene3D" id="6.20.220.10">
    <property type="entry name" value="ClpX chaperone, C4-type zinc finger domain"/>
    <property type="match status" value="1"/>
</dbReference>
<dbReference type="Gene3D" id="3.40.50.300">
    <property type="entry name" value="P-loop containing nucleotide triphosphate hydrolases"/>
    <property type="match status" value="1"/>
</dbReference>
<dbReference type="HAMAP" id="MF_00175">
    <property type="entry name" value="ClpX"/>
    <property type="match status" value="1"/>
</dbReference>
<dbReference type="InterPro" id="IPR003593">
    <property type="entry name" value="AAA+_ATPase"/>
</dbReference>
<dbReference type="InterPro" id="IPR050052">
    <property type="entry name" value="ATP-dep_Clp_protease_ClpX"/>
</dbReference>
<dbReference type="InterPro" id="IPR003959">
    <property type="entry name" value="ATPase_AAA_core"/>
</dbReference>
<dbReference type="InterPro" id="IPR019489">
    <property type="entry name" value="Clp_ATPase_C"/>
</dbReference>
<dbReference type="InterPro" id="IPR004487">
    <property type="entry name" value="Clp_protease_ATP-bd_su_ClpX"/>
</dbReference>
<dbReference type="InterPro" id="IPR046425">
    <property type="entry name" value="ClpX_bact"/>
</dbReference>
<dbReference type="InterPro" id="IPR027417">
    <property type="entry name" value="P-loop_NTPase"/>
</dbReference>
<dbReference type="InterPro" id="IPR010603">
    <property type="entry name" value="Znf_CppX_C4"/>
</dbReference>
<dbReference type="InterPro" id="IPR038366">
    <property type="entry name" value="Znf_CppX_C4_sf"/>
</dbReference>
<dbReference type="NCBIfam" id="TIGR00382">
    <property type="entry name" value="clpX"/>
    <property type="match status" value="1"/>
</dbReference>
<dbReference type="NCBIfam" id="NF003745">
    <property type="entry name" value="PRK05342.1"/>
    <property type="match status" value="1"/>
</dbReference>
<dbReference type="PANTHER" id="PTHR48102:SF7">
    <property type="entry name" value="ATP-DEPENDENT CLP PROTEASE ATP-BINDING SUBUNIT CLPX-LIKE, MITOCHONDRIAL"/>
    <property type="match status" value="1"/>
</dbReference>
<dbReference type="PANTHER" id="PTHR48102">
    <property type="entry name" value="ATP-DEPENDENT CLP PROTEASE ATP-BINDING SUBUNIT CLPX-LIKE, MITOCHONDRIAL-RELATED"/>
    <property type="match status" value="1"/>
</dbReference>
<dbReference type="Pfam" id="PF07724">
    <property type="entry name" value="AAA_2"/>
    <property type="match status" value="1"/>
</dbReference>
<dbReference type="Pfam" id="PF10431">
    <property type="entry name" value="ClpB_D2-small"/>
    <property type="match status" value="1"/>
</dbReference>
<dbReference type="Pfam" id="PF06689">
    <property type="entry name" value="zf-C4_ClpX"/>
    <property type="match status" value="1"/>
</dbReference>
<dbReference type="SMART" id="SM00382">
    <property type="entry name" value="AAA"/>
    <property type="match status" value="1"/>
</dbReference>
<dbReference type="SMART" id="SM01086">
    <property type="entry name" value="ClpB_D2-small"/>
    <property type="match status" value="1"/>
</dbReference>
<dbReference type="SMART" id="SM00994">
    <property type="entry name" value="zf-C4_ClpX"/>
    <property type="match status" value="1"/>
</dbReference>
<dbReference type="SUPFAM" id="SSF57716">
    <property type="entry name" value="Glucocorticoid receptor-like (DNA-binding domain)"/>
    <property type="match status" value="1"/>
</dbReference>
<dbReference type="SUPFAM" id="SSF52540">
    <property type="entry name" value="P-loop containing nucleoside triphosphate hydrolases"/>
    <property type="match status" value="1"/>
</dbReference>
<dbReference type="PROSITE" id="PS51902">
    <property type="entry name" value="CLPX_ZB"/>
    <property type="match status" value="1"/>
</dbReference>
<feature type="chain" id="PRO_1000077153" description="ATP-dependent Clp protease ATP-binding subunit ClpX">
    <location>
        <begin position="1"/>
        <end position="435"/>
    </location>
</feature>
<feature type="domain" description="ClpX-type ZB" evidence="2">
    <location>
        <begin position="1"/>
        <end position="53"/>
    </location>
</feature>
<feature type="region of interest" description="Disordered" evidence="3">
    <location>
        <begin position="401"/>
        <end position="435"/>
    </location>
</feature>
<feature type="binding site" evidence="2">
    <location>
        <position position="12"/>
    </location>
    <ligand>
        <name>Zn(2+)</name>
        <dbReference type="ChEBI" id="CHEBI:29105"/>
    </ligand>
</feature>
<feature type="binding site" evidence="2">
    <location>
        <position position="15"/>
    </location>
    <ligand>
        <name>Zn(2+)</name>
        <dbReference type="ChEBI" id="CHEBI:29105"/>
    </ligand>
</feature>
<feature type="binding site" evidence="2">
    <location>
        <position position="34"/>
    </location>
    <ligand>
        <name>Zn(2+)</name>
        <dbReference type="ChEBI" id="CHEBI:29105"/>
    </ligand>
</feature>
<feature type="binding site" evidence="2">
    <location>
        <position position="37"/>
    </location>
    <ligand>
        <name>Zn(2+)</name>
        <dbReference type="ChEBI" id="CHEBI:29105"/>
    </ligand>
</feature>
<feature type="binding site" evidence="1">
    <location>
        <begin position="119"/>
        <end position="126"/>
    </location>
    <ligand>
        <name>ATP</name>
        <dbReference type="ChEBI" id="CHEBI:30616"/>
    </ligand>
</feature>
<organism>
    <name type="scientific">Clostridium perfringens (strain SM101 / Type A)</name>
    <dbReference type="NCBI Taxonomy" id="289380"/>
    <lineage>
        <taxon>Bacteria</taxon>
        <taxon>Bacillati</taxon>
        <taxon>Bacillota</taxon>
        <taxon>Clostridia</taxon>
        <taxon>Eubacteriales</taxon>
        <taxon>Clostridiaceae</taxon>
        <taxon>Clostridium</taxon>
    </lineage>
</organism>
<evidence type="ECO:0000255" key="1">
    <source>
        <dbReference type="HAMAP-Rule" id="MF_00175"/>
    </source>
</evidence>
<evidence type="ECO:0000255" key="2">
    <source>
        <dbReference type="PROSITE-ProRule" id="PRU01250"/>
    </source>
</evidence>
<evidence type="ECO:0000256" key="3">
    <source>
        <dbReference type="SAM" id="MobiDB-lite"/>
    </source>
</evidence>
<protein>
    <recommendedName>
        <fullName evidence="1">ATP-dependent Clp protease ATP-binding subunit ClpX</fullName>
    </recommendedName>
</protein>
<gene>
    <name evidence="1" type="primary">clpX</name>
    <name type="ordered locus">CPR_1384</name>
</gene>
<reference key="1">
    <citation type="journal article" date="2006" name="Genome Res.">
        <title>Skewed genomic variability in strains of the toxigenic bacterial pathogen, Clostridium perfringens.</title>
        <authorList>
            <person name="Myers G.S.A."/>
            <person name="Rasko D.A."/>
            <person name="Cheung J.K."/>
            <person name="Ravel J."/>
            <person name="Seshadri R."/>
            <person name="DeBoy R.T."/>
            <person name="Ren Q."/>
            <person name="Varga J."/>
            <person name="Awad M.M."/>
            <person name="Brinkac L.M."/>
            <person name="Daugherty S.C."/>
            <person name="Haft D.H."/>
            <person name="Dodson R.J."/>
            <person name="Madupu R."/>
            <person name="Nelson W.C."/>
            <person name="Rosovitz M.J."/>
            <person name="Sullivan S.A."/>
            <person name="Khouri H."/>
            <person name="Dimitrov G.I."/>
            <person name="Watkins K.L."/>
            <person name="Mulligan S."/>
            <person name="Benton J."/>
            <person name="Radune D."/>
            <person name="Fisher D.J."/>
            <person name="Atkins H.S."/>
            <person name="Hiscox T."/>
            <person name="Jost B.H."/>
            <person name="Billington S.J."/>
            <person name="Songer J.G."/>
            <person name="McClane B.A."/>
            <person name="Titball R.W."/>
            <person name="Rood J.I."/>
            <person name="Melville S.B."/>
            <person name="Paulsen I.T."/>
        </authorList>
    </citation>
    <scope>NUCLEOTIDE SEQUENCE [LARGE SCALE GENOMIC DNA]</scope>
    <source>
        <strain>SM101 / Type A</strain>
    </source>
</reference>
<keyword id="KW-0067">ATP-binding</keyword>
<keyword id="KW-0143">Chaperone</keyword>
<keyword id="KW-0479">Metal-binding</keyword>
<keyword id="KW-0547">Nucleotide-binding</keyword>
<keyword id="KW-0862">Zinc</keyword>
<comment type="function">
    <text evidence="1">ATP-dependent specificity component of the Clp protease. It directs the protease to specific substrates. Can perform chaperone functions in the absence of ClpP.</text>
</comment>
<comment type="subunit">
    <text evidence="1">Component of the ClpX-ClpP complex. Forms a hexameric ring that, in the presence of ATP, binds to fourteen ClpP subunits assembled into a disk-like structure with a central cavity, resembling the structure of eukaryotic proteasomes.</text>
</comment>
<comment type="similarity">
    <text evidence="1">Belongs to the ClpX chaperone family.</text>
</comment>
<name>CLPX_CLOPS</name>
<proteinExistence type="inferred from homology"/>